<dbReference type="EC" id="4.1.3.17"/>
<dbReference type="EC" id="4.1.1.112"/>
<dbReference type="EMBL" id="BA000036">
    <property type="protein sequence ID" value="BAB98318.1"/>
    <property type="molecule type" value="Genomic_DNA"/>
</dbReference>
<dbReference type="EMBL" id="BX927150">
    <property type="protein sequence ID" value="CAF19631.1"/>
    <property type="status" value="ALT_INIT"/>
    <property type="molecule type" value="Genomic_DNA"/>
</dbReference>
<dbReference type="RefSeq" id="NP_600153.1">
    <property type="nucleotide sequence ID" value="NC_003450.3"/>
</dbReference>
<dbReference type="SMR" id="Q8NRW6"/>
<dbReference type="STRING" id="196627.cg1055"/>
<dbReference type="KEGG" id="cgb:cg1055"/>
<dbReference type="KEGG" id="cgl:Cgl0925"/>
<dbReference type="PATRIC" id="fig|196627.13.peg.911"/>
<dbReference type="eggNOG" id="COG0684">
    <property type="taxonomic scope" value="Bacteria"/>
</dbReference>
<dbReference type="HOGENOM" id="CLU_072626_4_0_11"/>
<dbReference type="OrthoDB" id="943692at2"/>
<dbReference type="BioCyc" id="CORYNE:G18NG-10495-MONOMER"/>
<dbReference type="Proteomes" id="UP000000582">
    <property type="component" value="Chromosome"/>
</dbReference>
<dbReference type="Proteomes" id="UP000001009">
    <property type="component" value="Chromosome"/>
</dbReference>
<dbReference type="GO" id="GO:0047443">
    <property type="term" value="F:4-hydroxy-4-methyl-2-oxoglutarate aldolase activity"/>
    <property type="evidence" value="ECO:0007669"/>
    <property type="project" value="UniProtKB-EC"/>
</dbReference>
<dbReference type="GO" id="GO:0046872">
    <property type="term" value="F:metal ion binding"/>
    <property type="evidence" value="ECO:0007669"/>
    <property type="project" value="UniProtKB-KW"/>
</dbReference>
<dbReference type="GO" id="GO:0008948">
    <property type="term" value="F:oxaloacetate decarboxylase activity"/>
    <property type="evidence" value="ECO:0007669"/>
    <property type="project" value="UniProtKB-EC"/>
</dbReference>
<dbReference type="GO" id="GO:0008428">
    <property type="term" value="F:ribonuclease inhibitor activity"/>
    <property type="evidence" value="ECO:0007669"/>
    <property type="project" value="InterPro"/>
</dbReference>
<dbReference type="GO" id="GO:0051252">
    <property type="term" value="P:regulation of RNA metabolic process"/>
    <property type="evidence" value="ECO:0007669"/>
    <property type="project" value="InterPro"/>
</dbReference>
<dbReference type="CDD" id="cd16841">
    <property type="entry name" value="RraA_family"/>
    <property type="match status" value="1"/>
</dbReference>
<dbReference type="Gene3D" id="3.50.30.40">
    <property type="entry name" value="Ribonuclease E inhibitor RraA/RraA-like"/>
    <property type="match status" value="1"/>
</dbReference>
<dbReference type="InterPro" id="IPR010203">
    <property type="entry name" value="RraA"/>
</dbReference>
<dbReference type="InterPro" id="IPR005493">
    <property type="entry name" value="RraA/RraA-like"/>
</dbReference>
<dbReference type="InterPro" id="IPR036704">
    <property type="entry name" value="RraA/RraA-like_sf"/>
</dbReference>
<dbReference type="NCBIfam" id="TIGR01935">
    <property type="entry name" value="NOT-MenG"/>
    <property type="match status" value="1"/>
</dbReference>
<dbReference type="NCBIfam" id="NF006875">
    <property type="entry name" value="PRK09372.1"/>
    <property type="match status" value="1"/>
</dbReference>
<dbReference type="PANTHER" id="PTHR33254">
    <property type="entry name" value="4-HYDROXY-4-METHYL-2-OXOGLUTARATE ALDOLASE 3-RELATED"/>
    <property type="match status" value="1"/>
</dbReference>
<dbReference type="PANTHER" id="PTHR33254:SF4">
    <property type="entry name" value="4-HYDROXY-4-METHYL-2-OXOGLUTARATE ALDOLASE 3-RELATED"/>
    <property type="match status" value="1"/>
</dbReference>
<dbReference type="Pfam" id="PF03737">
    <property type="entry name" value="RraA-like"/>
    <property type="match status" value="1"/>
</dbReference>
<dbReference type="SUPFAM" id="SSF89562">
    <property type="entry name" value="RraA-like"/>
    <property type="match status" value="1"/>
</dbReference>
<feature type="chain" id="PRO_0000209609" description="Putative 4-hydroxy-4-methyl-2-oxoglutarate aldolase">
    <location>
        <begin position="1"/>
        <end position="166"/>
    </location>
</feature>
<feature type="binding site" evidence="1">
    <location>
        <begin position="81"/>
        <end position="84"/>
    </location>
    <ligand>
        <name>substrate</name>
    </ligand>
</feature>
<feature type="binding site" evidence="1">
    <location>
        <position position="103"/>
    </location>
    <ligand>
        <name>substrate</name>
    </ligand>
</feature>
<feature type="binding site" evidence="1">
    <location>
        <position position="104"/>
    </location>
    <ligand>
        <name>a divalent metal cation</name>
        <dbReference type="ChEBI" id="CHEBI:60240"/>
    </ligand>
</feature>
<evidence type="ECO:0000250" key="1"/>
<evidence type="ECO:0000305" key="2"/>
<proteinExistence type="inferred from homology"/>
<name>RRAAH_CORGL</name>
<comment type="function">
    <text evidence="1">Catalyzes the aldol cleavage of 4-hydroxy-4-methyl-2-oxoglutarate (HMG) into 2 molecules of pyruvate. Also contains a secondary oxaloacetate (OAA) decarboxylase activity due to the common pyruvate enolate transition state formed following C-C bond cleavage in the retro-aldol and decarboxylation reactions (By similarity).</text>
</comment>
<comment type="catalytic activity">
    <reaction>
        <text>4-hydroxy-4-methyl-2-oxoglutarate = 2 pyruvate</text>
        <dbReference type="Rhea" id="RHEA:22748"/>
        <dbReference type="ChEBI" id="CHEBI:15361"/>
        <dbReference type="ChEBI" id="CHEBI:58276"/>
        <dbReference type="EC" id="4.1.3.17"/>
    </reaction>
</comment>
<comment type="catalytic activity">
    <reaction>
        <text>oxaloacetate + H(+) = pyruvate + CO2</text>
        <dbReference type="Rhea" id="RHEA:15641"/>
        <dbReference type="ChEBI" id="CHEBI:15361"/>
        <dbReference type="ChEBI" id="CHEBI:15378"/>
        <dbReference type="ChEBI" id="CHEBI:16452"/>
        <dbReference type="ChEBI" id="CHEBI:16526"/>
        <dbReference type="EC" id="4.1.1.112"/>
    </reaction>
</comment>
<comment type="cofactor">
    <cofactor evidence="1">
        <name>a divalent metal cation</name>
        <dbReference type="ChEBI" id="CHEBI:60240"/>
    </cofactor>
    <text evidence="1">Divalent metal cation.</text>
</comment>
<comment type="subunit">
    <text evidence="1">Homotrimer.</text>
</comment>
<comment type="similarity">
    <text evidence="2">Belongs to the class II aldolase/RraA-like family.</text>
</comment>
<comment type="sequence caution" evidence="2">
    <conflict type="erroneous initiation">
        <sequence resource="EMBL-CDS" id="CAF19631"/>
    </conflict>
</comment>
<reference key="1">
    <citation type="journal article" date="2003" name="Appl. Microbiol. Biotechnol.">
        <title>The Corynebacterium glutamicum genome: features and impacts on biotechnological processes.</title>
        <authorList>
            <person name="Ikeda M."/>
            <person name="Nakagawa S."/>
        </authorList>
    </citation>
    <scope>NUCLEOTIDE SEQUENCE [LARGE SCALE GENOMIC DNA]</scope>
    <source>
        <strain>ATCC 13032 / DSM 20300 / JCM 1318 / BCRC 11384 / CCUG 27702 / LMG 3730 / NBRC 12168 / NCIMB 10025 / NRRL B-2784 / 534</strain>
    </source>
</reference>
<reference key="2">
    <citation type="journal article" date="2003" name="J. Biotechnol.">
        <title>The complete Corynebacterium glutamicum ATCC 13032 genome sequence and its impact on the production of L-aspartate-derived amino acids and vitamins.</title>
        <authorList>
            <person name="Kalinowski J."/>
            <person name="Bathe B."/>
            <person name="Bartels D."/>
            <person name="Bischoff N."/>
            <person name="Bott M."/>
            <person name="Burkovski A."/>
            <person name="Dusch N."/>
            <person name="Eggeling L."/>
            <person name="Eikmanns B.J."/>
            <person name="Gaigalat L."/>
            <person name="Goesmann A."/>
            <person name="Hartmann M."/>
            <person name="Huthmacher K."/>
            <person name="Kraemer R."/>
            <person name="Linke B."/>
            <person name="McHardy A.C."/>
            <person name="Meyer F."/>
            <person name="Moeckel B."/>
            <person name="Pfefferle W."/>
            <person name="Puehler A."/>
            <person name="Rey D.A."/>
            <person name="Rueckert C."/>
            <person name="Rupp O."/>
            <person name="Sahm H."/>
            <person name="Wendisch V.F."/>
            <person name="Wiegraebe I."/>
            <person name="Tauch A."/>
        </authorList>
    </citation>
    <scope>NUCLEOTIDE SEQUENCE [LARGE SCALE GENOMIC DNA]</scope>
    <source>
        <strain>ATCC 13032 / DSM 20300 / JCM 1318 / BCRC 11384 / CCUG 27702 / LMG 3730 / NBRC 12168 / NCIMB 10025 / NRRL B-2784 / 534</strain>
    </source>
</reference>
<keyword id="KW-0456">Lyase</keyword>
<keyword id="KW-0479">Metal-binding</keyword>
<keyword id="KW-1185">Reference proteome</keyword>
<organism>
    <name type="scientific">Corynebacterium glutamicum (strain ATCC 13032 / DSM 20300 / JCM 1318 / BCRC 11384 / CCUG 27702 / LMG 3730 / NBRC 12168 / NCIMB 10025 / NRRL B-2784 / 534)</name>
    <dbReference type="NCBI Taxonomy" id="196627"/>
    <lineage>
        <taxon>Bacteria</taxon>
        <taxon>Bacillati</taxon>
        <taxon>Actinomycetota</taxon>
        <taxon>Actinomycetes</taxon>
        <taxon>Mycobacteriales</taxon>
        <taxon>Corynebacteriaceae</taxon>
        <taxon>Corynebacterium</taxon>
    </lineage>
</organism>
<protein>
    <recommendedName>
        <fullName>Putative 4-hydroxy-4-methyl-2-oxoglutarate aldolase</fullName>
        <shortName>HMG aldolase</shortName>
        <ecNumber>4.1.3.17</ecNumber>
    </recommendedName>
    <alternativeName>
        <fullName>Oxaloacetate decarboxylase</fullName>
        <shortName>OAA decarboxylase</shortName>
        <ecNumber>4.1.1.112</ecNumber>
    </alternativeName>
    <alternativeName>
        <fullName>Regulator of ribonuclease activity homolog</fullName>
    </alternativeName>
    <alternativeName>
        <fullName>RraA-like protein</fullName>
    </alternativeName>
</protein>
<accession>Q8NRW6</accession>
<sequence length="166" mass="17176">MTQSAPEFIATADLVDIIGDNAQSCDTQFQNLGGATEFHGIITTVKCFQDNALLKSILSEDNPGGVLVIDGDASVHTALVGDIIAGLGKDHGWSGVIVNGAIRDSAVIGTMTFGCKALGTNPRKSTKTGSGERDVVVSIGGIDFIPGHYVYADSDGIIVTEAPIKQ</sequence>
<gene>
    <name type="ordered locus">Cgl0925</name>
    <name type="ordered locus">cg1055</name>
</gene>